<keyword id="KW-1185">Reference proteome</keyword>
<proteinExistence type="inferred from homology"/>
<sequence>MEGTRSRVRITVEAEVRPTEDREKVLKAVRNVVEPESVRFEKIGSTEILVGESSTLASLSRLHSILRAERILDAARGAMKKGVQGADRMTIHLHKQAAYKGRLSFVSSDHESPMGAIRITIEHPNVREVIDWLAPPTVRGRPVFERRMPE</sequence>
<reference key="1">
    <citation type="journal article" date="1999" name="DNA Res.">
        <title>Complete genome sequence of an aerobic hyper-thermophilic crenarchaeon, Aeropyrum pernix K1.</title>
        <authorList>
            <person name="Kawarabayasi Y."/>
            <person name="Hino Y."/>
            <person name="Horikawa H."/>
            <person name="Yamazaki S."/>
            <person name="Haikawa Y."/>
            <person name="Jin-no K."/>
            <person name="Takahashi M."/>
            <person name="Sekine M."/>
            <person name="Baba S."/>
            <person name="Ankai A."/>
            <person name="Kosugi H."/>
            <person name="Hosoyama A."/>
            <person name="Fukui S."/>
            <person name="Nagai Y."/>
            <person name="Nishijima K."/>
            <person name="Nakazawa H."/>
            <person name="Takamiya M."/>
            <person name="Masuda S."/>
            <person name="Funahashi T."/>
            <person name="Tanaka T."/>
            <person name="Kudoh Y."/>
            <person name="Yamazaki J."/>
            <person name="Kushida N."/>
            <person name="Oguchi A."/>
            <person name="Aoki K."/>
            <person name="Kubota K."/>
            <person name="Nakamura Y."/>
            <person name="Nomura N."/>
            <person name="Sako Y."/>
            <person name="Kikuchi H."/>
        </authorList>
    </citation>
    <scope>NUCLEOTIDE SEQUENCE [LARGE SCALE GENOMIC DNA]</scope>
    <source>
        <strain>ATCC 700893 / DSM 11879 / JCM 9820 / NBRC 100138 / K1</strain>
    </source>
</reference>
<organism>
    <name type="scientific">Aeropyrum pernix (strain ATCC 700893 / DSM 11879 / JCM 9820 / NBRC 100138 / K1)</name>
    <dbReference type="NCBI Taxonomy" id="272557"/>
    <lineage>
        <taxon>Archaea</taxon>
        <taxon>Thermoproteota</taxon>
        <taxon>Thermoprotei</taxon>
        <taxon>Desulfurococcales</taxon>
        <taxon>Desulfurococcaceae</taxon>
        <taxon>Aeropyrum</taxon>
    </lineage>
</organism>
<name>Y1751_AERPE</name>
<dbReference type="EMBL" id="BA000002">
    <property type="protein sequence ID" value="BAA80754.1"/>
    <property type="molecule type" value="Genomic_DNA"/>
</dbReference>
<dbReference type="PIR" id="E72558">
    <property type="entry name" value="E72558"/>
</dbReference>
<dbReference type="RefSeq" id="WP_010866573.1">
    <property type="nucleotide sequence ID" value="NC_000854.2"/>
</dbReference>
<dbReference type="SMR" id="Q9YB44"/>
<dbReference type="STRING" id="272557.APE_1751"/>
<dbReference type="EnsemblBacteria" id="BAA80754">
    <property type="protein sequence ID" value="BAA80754"/>
    <property type="gene ID" value="APE_1751"/>
</dbReference>
<dbReference type="GeneID" id="1446218"/>
<dbReference type="KEGG" id="ape:APE_1751"/>
<dbReference type="eggNOG" id="arCOG01043">
    <property type="taxonomic scope" value="Archaea"/>
</dbReference>
<dbReference type="Proteomes" id="UP000002518">
    <property type="component" value="Chromosome"/>
</dbReference>
<dbReference type="Gene3D" id="3.30.1440.10">
    <property type="match status" value="1"/>
</dbReference>
<dbReference type="HAMAP" id="MF_01112">
    <property type="entry name" value="UPF0201"/>
    <property type="match status" value="1"/>
</dbReference>
<dbReference type="InterPro" id="IPR002739">
    <property type="entry name" value="PAB1135-like"/>
</dbReference>
<dbReference type="InterPro" id="IPR022803">
    <property type="entry name" value="Ribosomal_uL5_dom_sf"/>
</dbReference>
<dbReference type="NCBIfam" id="NF001687">
    <property type="entry name" value="PRK00447.1"/>
    <property type="match status" value="1"/>
</dbReference>
<dbReference type="PANTHER" id="PTHR39652">
    <property type="entry name" value="UPF0201 PROTEIN TK1335"/>
    <property type="match status" value="1"/>
</dbReference>
<dbReference type="PANTHER" id="PTHR39652:SF1">
    <property type="entry name" value="UPF0201 PROTEIN TK1335"/>
    <property type="match status" value="1"/>
</dbReference>
<dbReference type="Pfam" id="PF01877">
    <property type="entry name" value="RNA_binding"/>
    <property type="match status" value="1"/>
</dbReference>
<dbReference type="SUPFAM" id="SSF55282">
    <property type="entry name" value="RL5-like"/>
    <property type="match status" value="1"/>
</dbReference>
<gene>
    <name type="ordered locus">APE_1751</name>
</gene>
<accession>Q9YB44</accession>
<protein>
    <recommendedName>
        <fullName evidence="1">UPF0201 protein APE_1751</fullName>
    </recommendedName>
</protein>
<feature type="chain" id="PRO_0000094508" description="UPF0201 protein APE_1751">
    <location>
        <begin position="1"/>
        <end position="150"/>
    </location>
</feature>
<comment type="similarity">
    <text evidence="1">Belongs to the UPF0201 family.</text>
</comment>
<evidence type="ECO:0000255" key="1">
    <source>
        <dbReference type="HAMAP-Rule" id="MF_01112"/>
    </source>
</evidence>